<keyword id="KW-0963">Cytoplasm</keyword>
<keyword id="KW-0378">Hydrolase</keyword>
<keyword id="KW-0645">Protease</keyword>
<keyword id="KW-1185">Reference proteome</keyword>
<keyword id="KW-0720">Serine protease</keyword>
<keyword id="KW-0865">Zymogen</keyword>
<name>CLPP_ECOL6</name>
<comment type="function">
    <text evidence="2">Cleaves peptides in various proteins in a process that requires ATP hydrolysis. Has a chymotrypsin-like activity. Plays a major role in the degradation of misfolded proteins.</text>
</comment>
<comment type="catalytic activity">
    <reaction evidence="2">
        <text>Hydrolysis of proteins to small peptides in the presence of ATP and magnesium. alpha-casein is the usual test substrate. In the absence of ATP, only oligopeptides shorter than five residues are hydrolyzed (such as succinyl-Leu-Tyr-|-NHMec, and Leu-Tyr-Leu-|-Tyr-Trp, in which cleavage of the -Tyr-|-Leu- and -Tyr-|-Trp bonds also occurs).</text>
        <dbReference type="EC" id="3.4.21.92"/>
    </reaction>
</comment>
<comment type="subunit">
    <text evidence="2">Fourteen ClpP subunits assemble into 2 heptameric rings which stack back to back to give a disk-like structure with a central cavity, resembling the structure of eukaryotic proteasomes. Component of the ClpAP and ClpXP complexes.</text>
</comment>
<comment type="subcellular location">
    <subcellularLocation>
        <location evidence="2">Cytoplasm</location>
    </subcellularLocation>
</comment>
<comment type="similarity">
    <text evidence="2">Belongs to the peptidase S14 family.</text>
</comment>
<protein>
    <recommendedName>
        <fullName evidence="2">ATP-dependent Clp protease proteolytic subunit</fullName>
        <ecNumber evidence="2">3.4.21.92</ecNumber>
    </recommendedName>
    <alternativeName>
        <fullName evidence="2">Endopeptidase Clp</fullName>
    </alternativeName>
</protein>
<organism>
    <name type="scientific">Escherichia coli O6:H1 (strain CFT073 / ATCC 700928 / UPEC)</name>
    <dbReference type="NCBI Taxonomy" id="199310"/>
    <lineage>
        <taxon>Bacteria</taxon>
        <taxon>Pseudomonadati</taxon>
        <taxon>Pseudomonadota</taxon>
        <taxon>Gammaproteobacteria</taxon>
        <taxon>Enterobacterales</taxon>
        <taxon>Enterobacteriaceae</taxon>
        <taxon>Escherichia</taxon>
    </lineage>
</organism>
<dbReference type="EC" id="3.4.21.92" evidence="2"/>
<dbReference type="EMBL" id="AE014075">
    <property type="protein sequence ID" value="AAN79031.1"/>
    <property type="molecule type" value="Genomic_DNA"/>
</dbReference>
<dbReference type="RefSeq" id="WP_000122253.1">
    <property type="nucleotide sequence ID" value="NZ_CP051263.1"/>
</dbReference>
<dbReference type="SMR" id="P0A6G8"/>
<dbReference type="STRING" id="199310.c0553"/>
<dbReference type="MEROPS" id="S14.001"/>
<dbReference type="GeneID" id="93777017"/>
<dbReference type="KEGG" id="ecc:c0553"/>
<dbReference type="eggNOG" id="COG0740">
    <property type="taxonomic scope" value="Bacteria"/>
</dbReference>
<dbReference type="HOGENOM" id="CLU_058707_3_2_6"/>
<dbReference type="BioCyc" id="ECOL199310:C0553-MONOMER"/>
<dbReference type="Proteomes" id="UP000001410">
    <property type="component" value="Chromosome"/>
</dbReference>
<dbReference type="GO" id="GO:0005737">
    <property type="term" value="C:cytoplasm"/>
    <property type="evidence" value="ECO:0007669"/>
    <property type="project" value="UniProtKB-SubCell"/>
</dbReference>
<dbReference type="GO" id="GO:0009368">
    <property type="term" value="C:endopeptidase Clp complex"/>
    <property type="evidence" value="ECO:0007669"/>
    <property type="project" value="TreeGrafter"/>
</dbReference>
<dbReference type="GO" id="GO:0004176">
    <property type="term" value="F:ATP-dependent peptidase activity"/>
    <property type="evidence" value="ECO:0007669"/>
    <property type="project" value="InterPro"/>
</dbReference>
<dbReference type="GO" id="GO:0051117">
    <property type="term" value="F:ATPase binding"/>
    <property type="evidence" value="ECO:0007669"/>
    <property type="project" value="TreeGrafter"/>
</dbReference>
<dbReference type="GO" id="GO:0004252">
    <property type="term" value="F:serine-type endopeptidase activity"/>
    <property type="evidence" value="ECO:0007669"/>
    <property type="project" value="UniProtKB-UniRule"/>
</dbReference>
<dbReference type="GO" id="GO:0006515">
    <property type="term" value="P:protein quality control for misfolded or incompletely synthesized proteins"/>
    <property type="evidence" value="ECO:0007669"/>
    <property type="project" value="TreeGrafter"/>
</dbReference>
<dbReference type="CDD" id="cd07017">
    <property type="entry name" value="S14_ClpP_2"/>
    <property type="match status" value="1"/>
</dbReference>
<dbReference type="FunFam" id="3.90.226.10:FF:000001">
    <property type="entry name" value="ATP-dependent Clp protease proteolytic subunit"/>
    <property type="match status" value="1"/>
</dbReference>
<dbReference type="Gene3D" id="3.90.226.10">
    <property type="entry name" value="2-enoyl-CoA Hydratase, Chain A, domain 1"/>
    <property type="match status" value="1"/>
</dbReference>
<dbReference type="HAMAP" id="MF_00444">
    <property type="entry name" value="ClpP"/>
    <property type="match status" value="1"/>
</dbReference>
<dbReference type="InterPro" id="IPR001907">
    <property type="entry name" value="ClpP"/>
</dbReference>
<dbReference type="InterPro" id="IPR029045">
    <property type="entry name" value="ClpP/crotonase-like_dom_sf"/>
</dbReference>
<dbReference type="InterPro" id="IPR023562">
    <property type="entry name" value="ClpP/TepA"/>
</dbReference>
<dbReference type="InterPro" id="IPR033135">
    <property type="entry name" value="ClpP_His_AS"/>
</dbReference>
<dbReference type="InterPro" id="IPR018215">
    <property type="entry name" value="ClpP_Ser_AS"/>
</dbReference>
<dbReference type="NCBIfam" id="TIGR00493">
    <property type="entry name" value="clpP"/>
    <property type="match status" value="1"/>
</dbReference>
<dbReference type="NCBIfam" id="NF001368">
    <property type="entry name" value="PRK00277.1"/>
    <property type="match status" value="1"/>
</dbReference>
<dbReference type="NCBIfam" id="NF009205">
    <property type="entry name" value="PRK12553.1"/>
    <property type="match status" value="1"/>
</dbReference>
<dbReference type="PANTHER" id="PTHR10381">
    <property type="entry name" value="ATP-DEPENDENT CLP PROTEASE PROTEOLYTIC SUBUNIT"/>
    <property type="match status" value="1"/>
</dbReference>
<dbReference type="PANTHER" id="PTHR10381:SF70">
    <property type="entry name" value="ATP-DEPENDENT CLP PROTEASE PROTEOLYTIC SUBUNIT"/>
    <property type="match status" value="1"/>
</dbReference>
<dbReference type="Pfam" id="PF00574">
    <property type="entry name" value="CLP_protease"/>
    <property type="match status" value="1"/>
</dbReference>
<dbReference type="PRINTS" id="PR00127">
    <property type="entry name" value="CLPPROTEASEP"/>
</dbReference>
<dbReference type="SUPFAM" id="SSF52096">
    <property type="entry name" value="ClpP/crotonase"/>
    <property type="match status" value="1"/>
</dbReference>
<dbReference type="PROSITE" id="PS00382">
    <property type="entry name" value="CLP_PROTEASE_HIS"/>
    <property type="match status" value="1"/>
</dbReference>
<dbReference type="PROSITE" id="PS00381">
    <property type="entry name" value="CLP_PROTEASE_SER"/>
    <property type="match status" value="1"/>
</dbReference>
<accession>P0A6G8</accession>
<accession>P19245</accession>
<sequence>MSYSGERDNFAPHMALVPMVIEQTSRGERSFDIYSRLLKERVIFLTGQVEDHMANLIVAQMLFLEAENPEKDIYLYINSPGGVITAGMSIYDTMQFIKPDVSTICMGQAASMGAFLLTAGAKGKRFCLPNSRVMIHQPLGGYQGQATDIEIHAREILKVKGRMNELMALHTGQSLEQIERDTERDRFLSAPEAVEYGLVDSILTHRN</sequence>
<gene>
    <name evidence="2" type="primary">clpP</name>
    <name type="synonym">lopP</name>
    <name type="ordered locus">c0553</name>
</gene>
<reference key="1">
    <citation type="journal article" date="2002" name="Proc. Natl. Acad. Sci. U.S.A.">
        <title>Extensive mosaic structure revealed by the complete genome sequence of uropathogenic Escherichia coli.</title>
        <authorList>
            <person name="Welch R.A."/>
            <person name="Burland V."/>
            <person name="Plunkett G. III"/>
            <person name="Redford P."/>
            <person name="Roesch P."/>
            <person name="Rasko D."/>
            <person name="Buckles E.L."/>
            <person name="Liou S.-R."/>
            <person name="Boutin A."/>
            <person name="Hackett J."/>
            <person name="Stroud D."/>
            <person name="Mayhew G.F."/>
            <person name="Rose D.J."/>
            <person name="Zhou S."/>
            <person name="Schwartz D.C."/>
            <person name="Perna N.T."/>
            <person name="Mobley H.L.T."/>
            <person name="Donnenberg M.S."/>
            <person name="Blattner F.R."/>
        </authorList>
    </citation>
    <scope>NUCLEOTIDE SEQUENCE [LARGE SCALE GENOMIC DNA]</scope>
    <source>
        <strain>CFT073 / ATCC 700928 / UPEC</strain>
    </source>
</reference>
<feature type="propeptide" id="PRO_0000268015" evidence="1">
    <location>
        <begin position="1"/>
        <end position="14"/>
    </location>
</feature>
<feature type="chain" id="PRO_0000179552" description="ATP-dependent Clp protease proteolytic subunit">
    <location>
        <begin position="15"/>
        <end position="207"/>
    </location>
</feature>
<feature type="active site" description="Nucleophile" evidence="2">
    <location>
        <position position="111"/>
    </location>
</feature>
<feature type="active site" evidence="2">
    <location>
        <position position="136"/>
    </location>
</feature>
<proteinExistence type="inferred from homology"/>
<evidence type="ECO:0000250" key="1"/>
<evidence type="ECO:0000255" key="2">
    <source>
        <dbReference type="HAMAP-Rule" id="MF_00444"/>
    </source>
</evidence>